<protein>
    <recommendedName>
        <fullName evidence="1">Ribonuclease P protein component</fullName>
        <shortName evidence="1">RNase P protein</shortName>
        <shortName evidence="1">RNaseP protein</shortName>
        <ecNumber evidence="1">3.1.26.5</ecNumber>
    </recommendedName>
    <alternativeName>
        <fullName evidence="1">Protein C5</fullName>
    </alternativeName>
</protein>
<proteinExistence type="inferred from homology"/>
<dbReference type="EC" id="3.1.26.5" evidence="1"/>
<dbReference type="EMBL" id="AP008971">
    <property type="protein sequence ID" value="BAG09046.1"/>
    <property type="molecule type" value="Genomic_DNA"/>
</dbReference>
<dbReference type="RefSeq" id="WP_002837620.1">
    <property type="nucleotide sequence ID" value="NC_010376.1"/>
</dbReference>
<dbReference type="SMR" id="B0S3V6"/>
<dbReference type="STRING" id="334413.FMG_1628"/>
<dbReference type="KEGG" id="fma:FMG_1628"/>
<dbReference type="eggNOG" id="COG0594">
    <property type="taxonomic scope" value="Bacteria"/>
</dbReference>
<dbReference type="HOGENOM" id="CLU_117179_9_5_9"/>
<dbReference type="Proteomes" id="UP000001319">
    <property type="component" value="Chromosome"/>
</dbReference>
<dbReference type="GO" id="GO:0030677">
    <property type="term" value="C:ribonuclease P complex"/>
    <property type="evidence" value="ECO:0007669"/>
    <property type="project" value="TreeGrafter"/>
</dbReference>
<dbReference type="GO" id="GO:0042781">
    <property type="term" value="F:3'-tRNA processing endoribonuclease activity"/>
    <property type="evidence" value="ECO:0007669"/>
    <property type="project" value="TreeGrafter"/>
</dbReference>
<dbReference type="GO" id="GO:0004526">
    <property type="term" value="F:ribonuclease P activity"/>
    <property type="evidence" value="ECO:0007669"/>
    <property type="project" value="UniProtKB-UniRule"/>
</dbReference>
<dbReference type="GO" id="GO:0000049">
    <property type="term" value="F:tRNA binding"/>
    <property type="evidence" value="ECO:0007669"/>
    <property type="project" value="UniProtKB-UniRule"/>
</dbReference>
<dbReference type="GO" id="GO:0001682">
    <property type="term" value="P:tRNA 5'-leader removal"/>
    <property type="evidence" value="ECO:0007669"/>
    <property type="project" value="UniProtKB-UniRule"/>
</dbReference>
<dbReference type="Gene3D" id="3.30.230.10">
    <property type="match status" value="1"/>
</dbReference>
<dbReference type="HAMAP" id="MF_00227">
    <property type="entry name" value="RNase_P"/>
    <property type="match status" value="1"/>
</dbReference>
<dbReference type="InterPro" id="IPR020568">
    <property type="entry name" value="Ribosomal_Su5_D2-typ_SF"/>
</dbReference>
<dbReference type="InterPro" id="IPR014721">
    <property type="entry name" value="Ribsml_uS5_D2-typ_fold_subgr"/>
</dbReference>
<dbReference type="InterPro" id="IPR000100">
    <property type="entry name" value="RNase_P"/>
</dbReference>
<dbReference type="InterPro" id="IPR020539">
    <property type="entry name" value="RNase_P_CS"/>
</dbReference>
<dbReference type="NCBIfam" id="TIGR00188">
    <property type="entry name" value="rnpA"/>
    <property type="match status" value="1"/>
</dbReference>
<dbReference type="PANTHER" id="PTHR33992">
    <property type="entry name" value="RIBONUCLEASE P PROTEIN COMPONENT"/>
    <property type="match status" value="1"/>
</dbReference>
<dbReference type="PANTHER" id="PTHR33992:SF1">
    <property type="entry name" value="RIBONUCLEASE P PROTEIN COMPONENT"/>
    <property type="match status" value="1"/>
</dbReference>
<dbReference type="Pfam" id="PF00825">
    <property type="entry name" value="Ribonuclease_P"/>
    <property type="match status" value="1"/>
</dbReference>
<dbReference type="SUPFAM" id="SSF54211">
    <property type="entry name" value="Ribosomal protein S5 domain 2-like"/>
    <property type="match status" value="1"/>
</dbReference>
<dbReference type="PROSITE" id="PS00648">
    <property type="entry name" value="RIBONUCLEASE_P"/>
    <property type="match status" value="1"/>
</dbReference>
<organism>
    <name type="scientific">Finegoldia magna (strain ATCC 29328 / DSM 20472 / WAL 2508)</name>
    <name type="common">Peptostreptococcus magnus</name>
    <dbReference type="NCBI Taxonomy" id="334413"/>
    <lineage>
        <taxon>Bacteria</taxon>
        <taxon>Bacillati</taxon>
        <taxon>Bacillota</taxon>
        <taxon>Tissierellia</taxon>
        <taxon>Tissierellales</taxon>
        <taxon>Peptoniphilaceae</taxon>
        <taxon>Finegoldia</taxon>
    </lineage>
</organism>
<keyword id="KW-0255">Endonuclease</keyword>
<keyword id="KW-0378">Hydrolase</keyword>
<keyword id="KW-0540">Nuclease</keyword>
<keyword id="KW-1185">Reference proteome</keyword>
<keyword id="KW-0694">RNA-binding</keyword>
<keyword id="KW-0819">tRNA processing</keyword>
<reference key="1">
    <citation type="journal article" date="2008" name="DNA Res.">
        <title>Complete genome sequence of Finegoldia magna, an anaerobic opportunistic pathogen.</title>
        <authorList>
            <person name="Goto T."/>
            <person name="Yamashita A."/>
            <person name="Hirakawa H."/>
            <person name="Matsutani M."/>
            <person name="Todo K."/>
            <person name="Ohshima K."/>
            <person name="Toh H."/>
            <person name="Miyamoto K."/>
            <person name="Kuhara S."/>
            <person name="Hattori M."/>
            <person name="Shimizu T."/>
            <person name="Akimoto S."/>
        </authorList>
    </citation>
    <scope>NUCLEOTIDE SEQUENCE [LARGE SCALE GENOMIC DNA]</scope>
    <source>
        <strain>ATCC 29328 / DSM 20472 / WAL 2508</strain>
    </source>
</reference>
<accession>B0S3V6</accession>
<feature type="chain" id="PRO_1000100361" description="Ribonuclease P protein component">
    <location>
        <begin position="1"/>
        <end position="113"/>
    </location>
</feature>
<gene>
    <name evidence="1" type="primary">rnpA</name>
    <name type="ordered locus">FMG_1628</name>
</gene>
<evidence type="ECO:0000255" key="1">
    <source>
        <dbReference type="HAMAP-Rule" id="MF_00227"/>
    </source>
</evidence>
<comment type="function">
    <text evidence="1">RNaseP catalyzes the removal of the 5'-leader sequence from pre-tRNA to produce the mature 5'-terminus. It can also cleave other RNA substrates such as 4.5S RNA. The protein component plays an auxiliary but essential role in vivo by binding to the 5'-leader sequence and broadening the substrate specificity of the ribozyme.</text>
</comment>
<comment type="catalytic activity">
    <reaction evidence="1">
        <text>Endonucleolytic cleavage of RNA, removing 5'-extranucleotides from tRNA precursor.</text>
        <dbReference type="EC" id="3.1.26.5"/>
    </reaction>
</comment>
<comment type="subunit">
    <text evidence="1">Consists of a catalytic RNA component (M1 or rnpB) and a protein subunit.</text>
</comment>
<comment type="similarity">
    <text evidence="1">Belongs to the RnpA family.</text>
</comment>
<sequence>MDKSVRLRDNREYNVVYKRGKTYYNRNFSLVVYNSKKGTRIGFSVTKKYGNAVERNRIKRKLREIVRLNFSEFDKGLDMVIIPKKNTEDLTYKQLESALLHVCRKASNKKCQK</sequence>
<name>RNPA_FINM2</name>